<name>FB213_ARATH</name>
<dbReference type="EMBL" id="AL162295">
    <property type="protein sequence ID" value="CAB82683.1"/>
    <property type="molecule type" value="Genomic_DNA"/>
</dbReference>
<dbReference type="EMBL" id="CP002686">
    <property type="protein sequence ID" value="AEE80108.1"/>
    <property type="molecule type" value="Genomic_DNA"/>
</dbReference>
<dbReference type="EMBL" id="AK229888">
    <property type="protein sequence ID" value="BAF01717.1"/>
    <property type="status" value="ALT_INIT"/>
    <property type="molecule type" value="mRNA"/>
</dbReference>
<dbReference type="PIR" id="T47890">
    <property type="entry name" value="T47890"/>
</dbReference>
<dbReference type="RefSeq" id="NP_191638.1">
    <molecule id="Q9LZY4-1"/>
    <property type="nucleotide sequence ID" value="NM_115943.1"/>
</dbReference>
<dbReference type="FunCoup" id="Q9LZY4">
    <property type="interactions" value="71"/>
</dbReference>
<dbReference type="PaxDb" id="3702-AT3G60790.1"/>
<dbReference type="EnsemblPlants" id="AT3G60790.1">
    <molecule id="Q9LZY4-1"/>
    <property type="protein sequence ID" value="AT3G60790.1"/>
    <property type="gene ID" value="AT3G60790"/>
</dbReference>
<dbReference type="GeneID" id="825250"/>
<dbReference type="Gramene" id="AT3G60790.1">
    <molecule id="Q9LZY4-1"/>
    <property type="protein sequence ID" value="AT3G60790.1"/>
    <property type="gene ID" value="AT3G60790"/>
</dbReference>
<dbReference type="KEGG" id="ath:AT3G60790"/>
<dbReference type="Araport" id="AT3G60790"/>
<dbReference type="TAIR" id="AT3G60790"/>
<dbReference type="HOGENOM" id="CLU_030531_0_0_1"/>
<dbReference type="InParanoid" id="Q9LZY4"/>
<dbReference type="OMA" id="IELEIFF"/>
<dbReference type="PRO" id="PR:Q9LZY4"/>
<dbReference type="Proteomes" id="UP000006548">
    <property type="component" value="Chromosome 3"/>
</dbReference>
<dbReference type="ExpressionAtlas" id="Q9LZY4">
    <property type="expression patterns" value="baseline and differential"/>
</dbReference>
<dbReference type="CDD" id="cd22160">
    <property type="entry name" value="F-box_AtFBL13-like"/>
    <property type="match status" value="1"/>
</dbReference>
<dbReference type="Gene3D" id="3.80.10.10">
    <property type="entry name" value="Ribonuclease Inhibitor"/>
    <property type="match status" value="1"/>
</dbReference>
<dbReference type="InterPro" id="IPR036047">
    <property type="entry name" value="F-box-like_dom_sf"/>
</dbReference>
<dbReference type="InterPro" id="IPR053781">
    <property type="entry name" value="F-box_AtFBL13-like"/>
</dbReference>
<dbReference type="InterPro" id="IPR001810">
    <property type="entry name" value="F-box_dom"/>
</dbReference>
<dbReference type="InterPro" id="IPR053197">
    <property type="entry name" value="F-box_SCFL_complex_component"/>
</dbReference>
<dbReference type="InterPro" id="IPR032675">
    <property type="entry name" value="LRR_dom_sf"/>
</dbReference>
<dbReference type="InterPro" id="IPR055411">
    <property type="entry name" value="LRR_FXL15/At3g58940/PEG3-like"/>
</dbReference>
<dbReference type="PANTHER" id="PTHR34223:SF51">
    <property type="entry name" value="OS06G0556300 PROTEIN"/>
    <property type="match status" value="1"/>
</dbReference>
<dbReference type="PANTHER" id="PTHR34223">
    <property type="entry name" value="OS11G0201299 PROTEIN"/>
    <property type="match status" value="1"/>
</dbReference>
<dbReference type="Pfam" id="PF00646">
    <property type="entry name" value="F-box"/>
    <property type="match status" value="1"/>
</dbReference>
<dbReference type="Pfam" id="PF24758">
    <property type="entry name" value="LRR_At5g56370"/>
    <property type="match status" value="1"/>
</dbReference>
<dbReference type="SUPFAM" id="SSF81383">
    <property type="entry name" value="F-box domain"/>
    <property type="match status" value="1"/>
</dbReference>
<dbReference type="SUPFAM" id="SSF52047">
    <property type="entry name" value="RNI-like"/>
    <property type="match status" value="1"/>
</dbReference>
<dbReference type="PROSITE" id="PS50181">
    <property type="entry name" value="FBOX"/>
    <property type="match status" value="1"/>
</dbReference>
<gene>
    <name type="ordered locus">At3g60790</name>
    <name type="ORF">T4C21.200</name>
</gene>
<evidence type="ECO:0000255" key="1">
    <source>
        <dbReference type="PROSITE-ProRule" id="PRU00080"/>
    </source>
</evidence>
<evidence type="ECO:0000256" key="2">
    <source>
        <dbReference type="SAM" id="MobiDB-lite"/>
    </source>
</evidence>
<evidence type="ECO:0000305" key="3"/>
<organism>
    <name type="scientific">Arabidopsis thaliana</name>
    <name type="common">Mouse-ear cress</name>
    <dbReference type="NCBI Taxonomy" id="3702"/>
    <lineage>
        <taxon>Eukaryota</taxon>
        <taxon>Viridiplantae</taxon>
        <taxon>Streptophyta</taxon>
        <taxon>Embryophyta</taxon>
        <taxon>Tracheophyta</taxon>
        <taxon>Spermatophyta</taxon>
        <taxon>Magnoliopsida</taxon>
        <taxon>eudicotyledons</taxon>
        <taxon>Gunneridae</taxon>
        <taxon>Pentapetalae</taxon>
        <taxon>rosids</taxon>
        <taxon>malvids</taxon>
        <taxon>Brassicales</taxon>
        <taxon>Brassicaceae</taxon>
        <taxon>Camelineae</taxon>
        <taxon>Arabidopsis</taxon>
    </lineage>
</organism>
<comment type="alternative products">
    <event type="alternative splicing"/>
    <isoform>
        <id>Q9LZY4-1</id>
        <name>1</name>
        <sequence type="displayed"/>
    </isoform>
    <isoform>
        <id>Q9LZY4-2</id>
        <name>2</name>
        <sequence type="described" ref="VSP_042260 VSP_042261"/>
    </isoform>
</comment>
<comment type="miscellaneous">
    <molecule>Isoform 2</molecule>
    <text evidence="3">Incomplete sequence. May be due to an intron retention.</text>
</comment>
<comment type="sequence caution" evidence="3">
    <conflict type="erroneous initiation">
        <sequence resource="EMBL-CDS" id="BAF01717"/>
    </conflict>
    <text>Truncated N-terminus.</text>
</comment>
<proteinExistence type="evidence at transcript level"/>
<reference key="1">
    <citation type="journal article" date="2000" name="Nature">
        <title>Sequence and analysis of chromosome 3 of the plant Arabidopsis thaliana.</title>
        <authorList>
            <person name="Salanoubat M."/>
            <person name="Lemcke K."/>
            <person name="Rieger M."/>
            <person name="Ansorge W."/>
            <person name="Unseld M."/>
            <person name="Fartmann B."/>
            <person name="Valle G."/>
            <person name="Bloecker H."/>
            <person name="Perez-Alonso M."/>
            <person name="Obermaier B."/>
            <person name="Delseny M."/>
            <person name="Boutry M."/>
            <person name="Grivell L.A."/>
            <person name="Mache R."/>
            <person name="Puigdomenech P."/>
            <person name="De Simone V."/>
            <person name="Choisne N."/>
            <person name="Artiguenave F."/>
            <person name="Robert C."/>
            <person name="Brottier P."/>
            <person name="Wincker P."/>
            <person name="Cattolico L."/>
            <person name="Weissenbach J."/>
            <person name="Saurin W."/>
            <person name="Quetier F."/>
            <person name="Schaefer M."/>
            <person name="Mueller-Auer S."/>
            <person name="Gabel C."/>
            <person name="Fuchs M."/>
            <person name="Benes V."/>
            <person name="Wurmbach E."/>
            <person name="Drzonek H."/>
            <person name="Erfle H."/>
            <person name="Jordan N."/>
            <person name="Bangert S."/>
            <person name="Wiedelmann R."/>
            <person name="Kranz H."/>
            <person name="Voss H."/>
            <person name="Holland R."/>
            <person name="Brandt P."/>
            <person name="Nyakatura G."/>
            <person name="Vezzi A."/>
            <person name="D'Angelo M."/>
            <person name="Pallavicini A."/>
            <person name="Toppo S."/>
            <person name="Simionati B."/>
            <person name="Conrad A."/>
            <person name="Hornischer K."/>
            <person name="Kauer G."/>
            <person name="Loehnert T.-H."/>
            <person name="Nordsiek G."/>
            <person name="Reichelt J."/>
            <person name="Scharfe M."/>
            <person name="Schoen O."/>
            <person name="Bargues M."/>
            <person name="Terol J."/>
            <person name="Climent J."/>
            <person name="Navarro P."/>
            <person name="Collado C."/>
            <person name="Perez-Perez A."/>
            <person name="Ottenwaelder B."/>
            <person name="Duchemin D."/>
            <person name="Cooke R."/>
            <person name="Laudie M."/>
            <person name="Berger-Llauro C."/>
            <person name="Purnelle B."/>
            <person name="Masuy D."/>
            <person name="de Haan M."/>
            <person name="Maarse A.C."/>
            <person name="Alcaraz J.-P."/>
            <person name="Cottet A."/>
            <person name="Casacuberta E."/>
            <person name="Monfort A."/>
            <person name="Argiriou A."/>
            <person name="Flores M."/>
            <person name="Liguori R."/>
            <person name="Vitale D."/>
            <person name="Mannhaupt G."/>
            <person name="Haase D."/>
            <person name="Schoof H."/>
            <person name="Rudd S."/>
            <person name="Zaccaria P."/>
            <person name="Mewes H.-W."/>
            <person name="Mayer K.F.X."/>
            <person name="Kaul S."/>
            <person name="Town C.D."/>
            <person name="Koo H.L."/>
            <person name="Tallon L.J."/>
            <person name="Jenkins J."/>
            <person name="Rooney T."/>
            <person name="Rizzo M."/>
            <person name="Walts A."/>
            <person name="Utterback T."/>
            <person name="Fujii C.Y."/>
            <person name="Shea T.P."/>
            <person name="Creasy T.H."/>
            <person name="Haas B."/>
            <person name="Maiti R."/>
            <person name="Wu D."/>
            <person name="Peterson J."/>
            <person name="Van Aken S."/>
            <person name="Pai G."/>
            <person name="Militscher J."/>
            <person name="Sellers P."/>
            <person name="Gill J.E."/>
            <person name="Feldblyum T.V."/>
            <person name="Preuss D."/>
            <person name="Lin X."/>
            <person name="Nierman W.C."/>
            <person name="Salzberg S.L."/>
            <person name="White O."/>
            <person name="Venter J.C."/>
            <person name="Fraser C.M."/>
            <person name="Kaneko T."/>
            <person name="Nakamura Y."/>
            <person name="Sato S."/>
            <person name="Kato T."/>
            <person name="Asamizu E."/>
            <person name="Sasamoto S."/>
            <person name="Kimura T."/>
            <person name="Idesawa K."/>
            <person name="Kawashima K."/>
            <person name="Kishida Y."/>
            <person name="Kiyokawa C."/>
            <person name="Kohara M."/>
            <person name="Matsumoto M."/>
            <person name="Matsuno A."/>
            <person name="Muraki A."/>
            <person name="Nakayama S."/>
            <person name="Nakazaki N."/>
            <person name="Shinpo S."/>
            <person name="Takeuchi C."/>
            <person name="Wada T."/>
            <person name="Watanabe A."/>
            <person name="Yamada M."/>
            <person name="Yasuda M."/>
            <person name="Tabata S."/>
        </authorList>
    </citation>
    <scope>NUCLEOTIDE SEQUENCE [LARGE SCALE GENOMIC DNA]</scope>
    <source>
        <strain>cv. Columbia</strain>
    </source>
</reference>
<reference key="2">
    <citation type="journal article" date="2017" name="Plant J.">
        <title>Araport11: a complete reannotation of the Arabidopsis thaliana reference genome.</title>
        <authorList>
            <person name="Cheng C.Y."/>
            <person name="Krishnakumar V."/>
            <person name="Chan A.P."/>
            <person name="Thibaud-Nissen F."/>
            <person name="Schobel S."/>
            <person name="Town C.D."/>
        </authorList>
    </citation>
    <scope>GENOME REANNOTATION</scope>
    <source>
        <strain>cv. Columbia</strain>
    </source>
</reference>
<reference key="3">
    <citation type="submission" date="2006-07" db="EMBL/GenBank/DDBJ databases">
        <title>Large-scale analysis of RIKEN Arabidopsis full-length (RAFL) cDNAs.</title>
        <authorList>
            <person name="Totoki Y."/>
            <person name="Seki M."/>
            <person name="Ishida J."/>
            <person name="Nakajima M."/>
            <person name="Enju A."/>
            <person name="Kamiya A."/>
            <person name="Narusaka M."/>
            <person name="Shin-i T."/>
            <person name="Nakagawa M."/>
            <person name="Sakamoto N."/>
            <person name="Oishi K."/>
            <person name="Kohara Y."/>
            <person name="Kobayashi M."/>
            <person name="Toyoda A."/>
            <person name="Sakaki Y."/>
            <person name="Sakurai T."/>
            <person name="Iida K."/>
            <person name="Akiyama K."/>
            <person name="Satou M."/>
            <person name="Toyoda T."/>
            <person name="Konagaya A."/>
            <person name="Carninci P."/>
            <person name="Kawai J."/>
            <person name="Hayashizaki Y."/>
            <person name="Shinozaki K."/>
        </authorList>
    </citation>
    <scope>PARTIAL NUCLEOTIDE SEQUENCE [LARGE SCALE MRNA] (ISOFORM 2)</scope>
    <source>
        <strain>cv. Columbia</strain>
    </source>
</reference>
<feature type="chain" id="PRO_0000283482" description="F-box protein At3g60790">
    <location>
        <begin position="1"/>
        <end position="488"/>
    </location>
</feature>
<feature type="domain" description="F-box" evidence="1">
    <location>
        <begin position="49"/>
        <end position="95"/>
    </location>
</feature>
<feature type="region of interest" description="Disordered" evidence="2">
    <location>
        <begin position="1"/>
        <end position="21"/>
    </location>
</feature>
<feature type="splice variant" id="VSP_042260" description="In isoform 2." evidence="3">
    <original>EKIRIWLELMVSQIYHMKRTGSLSVSVDVRNPNEVE</original>
    <variation>VQVQATCMPLDIILNIIFCFDMVCCIMNSGENKNLA</variation>
    <location>
        <begin position="328"/>
        <end position="363"/>
    </location>
</feature>
<feature type="splice variant" id="VSP_042261" description="In isoform 2." evidence="3">
    <location>
        <begin position="364"/>
        <end position="488"/>
    </location>
</feature>
<protein>
    <recommendedName>
        <fullName>F-box protein At3g60790</fullName>
    </recommendedName>
</protein>
<keyword id="KW-0025">Alternative splicing</keyword>
<keyword id="KW-1185">Reference proteome</keyword>
<sequence>MTTQSSSSSSSLPSSLSSTPPLLASNARCKVLRTGASSKGKGKGIKYPVDRISMLPDEMLQKILSTLSTKDAVITSTLSKRWVDQWKRIPHLCVDMRNIMRTNPTSYVHELSFRFAESMTKTLNNHRGHLESCTISHIQFIFLFIDRWIQTVTREKQTKEITLVNNIGCMTPFVRYNSLHLSPSAFCHPSLTSLSLTRYKLLEKAFKNCCNLKILKLYDIMSDVSVLSNVIKACSSLEVLVLQITFLNQASALKIENKKLEFLQVTWPCLMNRMEVNTPRLVIFDIKSIYCFGYSVEAPKLSMFKRDYWVGGMSYPHLSYHISSLAQEKIRIWLELMVSQIYHMKRTGSLSVSVDVRNPNEVEILKEVLLLWDGEMMDLEILFKNNNAPIEEGESFITGGARNKWWDGEKPFPDDFFRVCTVWMYNFDGSNEEEFALASRFVTQGTVTEKLMIKTSTYPPVKQLMTEAKVAKLMELPKGYEYLDIECF</sequence>
<accession>Q9LZY4</accession>
<accession>F4JCZ5</accession>
<accession>Q0WMD9</accession>